<sequence length="347" mass="39993">MTAKQIFPVWKDCTLYVNNETATVHEILNSDLSELLQLKTEFVSMTDLCVYITGCINQNISSITIYWHAYSEVIYALTGIIHCEKISIECGIKSTDNNILYEKPKLFLLRENLAPTELRWKSLIKTKTIKSALSPNQNEIFPKIAHKPSILLEIEEAPRFKEMVSCIWKLVAEEATITSKSENDIVKTCKKLAESQRYTLTNGTVLQNFILVHACLFKLGAVNFWEEMNGKLRQRPELMSKSFTGHEECFYNCYYLCTLLNSIYSYKTLLPEIVDNTRSIHVVVKAYYSEHIDVSYKILSYSTNMMNLFSQYLNFTDLLPYINKHIKIDVSASKQDMIKFLNACLGL</sequence>
<protein>
    <recommendedName>
        <fullName>Protein U59</fullName>
    </recommendedName>
</protein>
<accession>P52364</accession>
<feature type="chain" id="PRO_0000116233" description="Protein U59">
    <location>
        <begin position="1"/>
        <end position="347"/>
    </location>
</feature>
<comment type="similarity">
    <text evidence="1">Belongs to the herpesviridae U59/UL88 family.</text>
</comment>
<gene>
    <name type="primary">U59</name>
</gene>
<organism>
    <name type="scientific">Human herpesvirus 7 (strain JI)</name>
    <name type="common">HHV-7</name>
    <name type="synonym">Human T lymphotropic virus</name>
    <dbReference type="NCBI Taxonomy" id="57278"/>
    <lineage>
        <taxon>Viruses</taxon>
        <taxon>Duplodnaviria</taxon>
        <taxon>Heunggongvirae</taxon>
        <taxon>Peploviricota</taxon>
        <taxon>Herviviricetes</taxon>
        <taxon>Herpesvirales</taxon>
        <taxon>Orthoherpesviridae</taxon>
        <taxon>Betaherpesvirinae</taxon>
        <taxon>Roseolovirus</taxon>
        <taxon>Roseolovirus humanbeta7</taxon>
        <taxon>Human betaherpesvirus 7</taxon>
    </lineage>
</organism>
<reference key="1">
    <citation type="journal article" date="1996" name="J. Virol.">
        <title>Determination and analysis of the complete nucleotide sequence of human herpesvirus.</title>
        <authorList>
            <person name="Nicholas J."/>
        </authorList>
    </citation>
    <scope>NUCLEOTIDE SEQUENCE [LARGE SCALE GENOMIC DNA]</scope>
</reference>
<proteinExistence type="inferred from homology"/>
<organismHost>
    <name type="scientific">Homo sapiens</name>
    <name type="common">Human</name>
    <dbReference type="NCBI Taxonomy" id="9606"/>
</organismHost>
<keyword id="KW-1185">Reference proteome</keyword>
<name>UL88_HHV7J</name>
<dbReference type="EMBL" id="U43400">
    <property type="protein sequence ID" value="AAC54722.1"/>
    <property type="molecule type" value="Genomic_DNA"/>
</dbReference>
<dbReference type="PIR" id="T41962">
    <property type="entry name" value="T41962"/>
</dbReference>
<dbReference type="RefSeq" id="YP_073801.1">
    <property type="nucleotide sequence ID" value="NC_001716.2"/>
</dbReference>
<dbReference type="SMR" id="P52364"/>
<dbReference type="DNASU" id="3289519"/>
<dbReference type="GeneID" id="3289519"/>
<dbReference type="KEGG" id="vg:3289519"/>
<dbReference type="Proteomes" id="UP000009246">
    <property type="component" value="Segment"/>
</dbReference>
<dbReference type="InterPro" id="IPR007616">
    <property type="entry name" value="Herpes_U59/UL88"/>
</dbReference>
<dbReference type="Pfam" id="PF04529">
    <property type="entry name" value="Herpes_U59"/>
    <property type="match status" value="1"/>
</dbReference>
<evidence type="ECO:0000305" key="1"/>